<protein>
    <recommendedName>
        <fullName evidence="1">UPF0473 protein Helmi_02360</fullName>
    </recommendedName>
</protein>
<accession>B0TFZ1</accession>
<evidence type="ECO:0000255" key="1">
    <source>
        <dbReference type="HAMAP-Rule" id="MF_01448"/>
    </source>
</evidence>
<keyword id="KW-1185">Reference proteome</keyword>
<comment type="similarity">
    <text evidence="1">Belongs to the UPF0473 family.</text>
</comment>
<sequence length="89" mass="10582">MDQEQENIIVLTDEDGNELEFEELDRVEVDGKEYAILLPLDDEEDEAIILRVEYEENGEEVFSHIEDDEEWEKVADFWQELSEEDGEEE</sequence>
<reference key="1">
    <citation type="journal article" date="2008" name="J. Bacteriol.">
        <title>The genome of Heliobacterium modesticaldum, a phototrophic representative of the Firmicutes containing the simplest photosynthetic apparatus.</title>
        <authorList>
            <person name="Sattley W.M."/>
            <person name="Madigan M.T."/>
            <person name="Swingley W.D."/>
            <person name="Cheung P.C."/>
            <person name="Clocksin K.M."/>
            <person name="Conrad A.L."/>
            <person name="Dejesa L.C."/>
            <person name="Honchak B.M."/>
            <person name="Jung D.O."/>
            <person name="Karbach L.E."/>
            <person name="Kurdoglu A."/>
            <person name="Lahiri S."/>
            <person name="Mastrian S.D."/>
            <person name="Page L.E."/>
            <person name="Taylor H.L."/>
            <person name="Wang Z.T."/>
            <person name="Raymond J."/>
            <person name="Chen M."/>
            <person name="Blankenship R.E."/>
            <person name="Touchman J.W."/>
        </authorList>
    </citation>
    <scope>NUCLEOTIDE SEQUENCE [LARGE SCALE GENOMIC DNA]</scope>
    <source>
        <strain>ATCC 51547 / Ice1</strain>
    </source>
</reference>
<gene>
    <name type="ordered locus">Helmi_02360</name>
    <name type="ORF">HM1_0534</name>
</gene>
<proteinExistence type="inferred from homology"/>
<organism>
    <name type="scientific">Heliobacterium modesticaldum (strain ATCC 51547 / Ice1)</name>
    <dbReference type="NCBI Taxonomy" id="498761"/>
    <lineage>
        <taxon>Bacteria</taxon>
        <taxon>Bacillati</taxon>
        <taxon>Bacillota</taxon>
        <taxon>Clostridia</taxon>
        <taxon>Eubacteriales</taxon>
        <taxon>Heliobacteriaceae</taxon>
        <taxon>Heliomicrobium</taxon>
    </lineage>
</organism>
<dbReference type="EMBL" id="CP000930">
    <property type="protein sequence ID" value="ABZ83148.1"/>
    <property type="molecule type" value="Genomic_DNA"/>
</dbReference>
<dbReference type="RefSeq" id="WP_012281410.1">
    <property type="nucleotide sequence ID" value="NC_010337.2"/>
</dbReference>
<dbReference type="SMR" id="B0TFZ1"/>
<dbReference type="STRING" id="498761.HM1_0534"/>
<dbReference type="KEGG" id="hmo:HM1_0534"/>
<dbReference type="eggNOG" id="COG3906">
    <property type="taxonomic scope" value="Bacteria"/>
</dbReference>
<dbReference type="HOGENOM" id="CLU_146610_8_1_9"/>
<dbReference type="OrthoDB" id="9811971at2"/>
<dbReference type="Proteomes" id="UP000008550">
    <property type="component" value="Chromosome"/>
</dbReference>
<dbReference type="HAMAP" id="MF_01448">
    <property type="entry name" value="UPF0473"/>
    <property type="match status" value="1"/>
</dbReference>
<dbReference type="InterPro" id="IPR009711">
    <property type="entry name" value="UPF0473"/>
</dbReference>
<dbReference type="Pfam" id="PF06949">
    <property type="entry name" value="DUF1292"/>
    <property type="match status" value="1"/>
</dbReference>
<name>Y236_HELMI</name>
<feature type="chain" id="PRO_1000200977" description="UPF0473 protein Helmi_02360">
    <location>
        <begin position="1"/>
        <end position="89"/>
    </location>
</feature>